<accession>Q9SYA0</accession>
<gene>
    <name type="ordered locus">At1g61500</name>
    <name type="ORF">T25B24.15</name>
</gene>
<feature type="signal peptide" evidence="3">
    <location>
        <begin position="1"/>
        <end position="24"/>
    </location>
</feature>
<feature type="chain" id="PRO_0000401319" description="G-type lectin S-receptor-like serine/threonine-protein kinase At1g61500">
    <location>
        <begin position="25"/>
        <end position="804"/>
    </location>
</feature>
<feature type="topological domain" description="Extracellular" evidence="3">
    <location>
        <begin position="25"/>
        <end position="427"/>
    </location>
</feature>
<feature type="transmembrane region" description="Helical" evidence="3">
    <location>
        <begin position="428"/>
        <end position="448"/>
    </location>
</feature>
<feature type="topological domain" description="Cytoplasmic" evidence="3">
    <location>
        <begin position="449"/>
        <end position="804"/>
    </location>
</feature>
<feature type="domain" description="Bulb-type lectin" evidence="4">
    <location>
        <begin position="25"/>
        <end position="145"/>
    </location>
</feature>
<feature type="domain" description="EGF-like; atypical">
    <location>
        <begin position="279"/>
        <end position="315"/>
    </location>
</feature>
<feature type="domain" description="PAN" evidence="6">
    <location>
        <begin position="334"/>
        <end position="416"/>
    </location>
</feature>
<feature type="domain" description="Protein kinase" evidence="5">
    <location>
        <begin position="491"/>
        <end position="776"/>
    </location>
</feature>
<feature type="region of interest" description="CaM-binding" evidence="1">
    <location>
        <begin position="580"/>
        <end position="597"/>
    </location>
</feature>
<feature type="active site" description="Proton acceptor" evidence="5 7">
    <location>
        <position position="616"/>
    </location>
</feature>
<feature type="binding site" evidence="5">
    <location>
        <begin position="497"/>
        <end position="505"/>
    </location>
    <ligand>
        <name>ATP</name>
        <dbReference type="ChEBI" id="CHEBI:30616"/>
    </ligand>
</feature>
<feature type="binding site" evidence="5">
    <location>
        <position position="519"/>
    </location>
    <ligand>
        <name>ATP</name>
        <dbReference type="ChEBI" id="CHEBI:30616"/>
    </ligand>
</feature>
<feature type="modified residue" description="Phosphoserine" evidence="2">
    <location>
        <position position="525"/>
    </location>
</feature>
<feature type="modified residue" description="Phosphoserine" evidence="2">
    <location>
        <position position="540"/>
    </location>
</feature>
<feature type="modified residue" description="Phosphoserine" evidence="2">
    <location>
        <position position="620"/>
    </location>
</feature>
<feature type="modified residue" description="Phosphoserine" evidence="2">
    <location>
        <position position="633"/>
    </location>
</feature>
<feature type="modified residue" description="Phosphothreonine" evidence="2">
    <location>
        <position position="650"/>
    </location>
</feature>
<feature type="modified residue" description="Phosphoserine" evidence="2">
    <location>
        <position position="693"/>
    </location>
</feature>
<feature type="modified residue" description="Phosphoserine" evidence="2">
    <location>
        <position position="787"/>
    </location>
</feature>
<feature type="glycosylation site" description="N-linked (GlcNAc...) asparagine" evidence="3">
    <location>
        <position position="54"/>
    </location>
</feature>
<feature type="glycosylation site" description="N-linked (GlcNAc...) asparagine" evidence="3">
    <location>
        <position position="135"/>
    </location>
</feature>
<feature type="glycosylation site" description="N-linked (GlcNAc...) asparagine" evidence="3">
    <location>
        <position position="237"/>
    </location>
</feature>
<feature type="glycosylation site" description="N-linked (GlcNAc...) asparagine" evidence="3">
    <location>
        <position position="321"/>
    </location>
</feature>
<feature type="glycosylation site" description="N-linked (GlcNAc...) asparagine" evidence="3">
    <location>
        <position position="337"/>
    </location>
</feature>
<feature type="glycosylation site" description="N-linked (GlcNAc...) asparagine" evidence="3">
    <location>
        <position position="376"/>
    </location>
</feature>
<feature type="disulfide bond" evidence="1">
    <location>
        <begin position="283"/>
        <end position="295"/>
    </location>
</feature>
<feature type="disulfide bond" evidence="1">
    <location>
        <begin position="289"/>
        <end position="303"/>
    </location>
</feature>
<feature type="disulfide bond" evidence="1">
    <location>
        <begin position="369"/>
        <end position="390"/>
    </location>
</feature>
<feature type="disulfide bond" evidence="1">
    <location>
        <begin position="373"/>
        <end position="379"/>
    </location>
</feature>
<protein>
    <recommendedName>
        <fullName>G-type lectin S-receptor-like serine/threonine-protein kinase At1g61500</fullName>
        <ecNumber>2.7.11.1</ecNumber>
    </recommendedName>
</protein>
<proteinExistence type="evidence at transcript level"/>
<reference key="1">
    <citation type="journal article" date="2000" name="Nature">
        <title>Sequence and analysis of chromosome 1 of the plant Arabidopsis thaliana.</title>
        <authorList>
            <person name="Theologis A."/>
            <person name="Ecker J.R."/>
            <person name="Palm C.J."/>
            <person name="Federspiel N.A."/>
            <person name="Kaul S."/>
            <person name="White O."/>
            <person name="Alonso J."/>
            <person name="Altafi H."/>
            <person name="Araujo R."/>
            <person name="Bowman C.L."/>
            <person name="Brooks S.Y."/>
            <person name="Buehler E."/>
            <person name="Chan A."/>
            <person name="Chao Q."/>
            <person name="Chen H."/>
            <person name="Cheuk R.F."/>
            <person name="Chin C.W."/>
            <person name="Chung M.K."/>
            <person name="Conn L."/>
            <person name="Conway A.B."/>
            <person name="Conway A.R."/>
            <person name="Creasy T.H."/>
            <person name="Dewar K."/>
            <person name="Dunn P."/>
            <person name="Etgu P."/>
            <person name="Feldblyum T.V."/>
            <person name="Feng J.-D."/>
            <person name="Fong B."/>
            <person name="Fujii C.Y."/>
            <person name="Gill J.E."/>
            <person name="Goldsmith A.D."/>
            <person name="Haas B."/>
            <person name="Hansen N.F."/>
            <person name="Hughes B."/>
            <person name="Huizar L."/>
            <person name="Hunter J.L."/>
            <person name="Jenkins J."/>
            <person name="Johnson-Hopson C."/>
            <person name="Khan S."/>
            <person name="Khaykin E."/>
            <person name="Kim C.J."/>
            <person name="Koo H.L."/>
            <person name="Kremenetskaia I."/>
            <person name="Kurtz D.B."/>
            <person name="Kwan A."/>
            <person name="Lam B."/>
            <person name="Langin-Hooper S."/>
            <person name="Lee A."/>
            <person name="Lee J.M."/>
            <person name="Lenz C.A."/>
            <person name="Li J.H."/>
            <person name="Li Y.-P."/>
            <person name="Lin X."/>
            <person name="Liu S.X."/>
            <person name="Liu Z.A."/>
            <person name="Luros J.S."/>
            <person name="Maiti R."/>
            <person name="Marziali A."/>
            <person name="Militscher J."/>
            <person name="Miranda M."/>
            <person name="Nguyen M."/>
            <person name="Nierman W.C."/>
            <person name="Osborne B.I."/>
            <person name="Pai G."/>
            <person name="Peterson J."/>
            <person name="Pham P.K."/>
            <person name="Rizzo M."/>
            <person name="Rooney T."/>
            <person name="Rowley D."/>
            <person name="Sakano H."/>
            <person name="Salzberg S.L."/>
            <person name="Schwartz J.R."/>
            <person name="Shinn P."/>
            <person name="Southwick A.M."/>
            <person name="Sun H."/>
            <person name="Tallon L.J."/>
            <person name="Tambunga G."/>
            <person name="Toriumi M.J."/>
            <person name="Town C.D."/>
            <person name="Utterback T."/>
            <person name="Van Aken S."/>
            <person name="Vaysberg M."/>
            <person name="Vysotskaia V.S."/>
            <person name="Walker M."/>
            <person name="Wu D."/>
            <person name="Yu G."/>
            <person name="Fraser C.M."/>
            <person name="Venter J.C."/>
            <person name="Davis R.W."/>
        </authorList>
    </citation>
    <scope>NUCLEOTIDE SEQUENCE [LARGE SCALE GENOMIC DNA]</scope>
    <source>
        <strain>cv. Columbia</strain>
    </source>
</reference>
<reference key="2">
    <citation type="journal article" date="2017" name="Plant J.">
        <title>Araport11: a complete reannotation of the Arabidopsis thaliana reference genome.</title>
        <authorList>
            <person name="Cheng C.Y."/>
            <person name="Krishnakumar V."/>
            <person name="Chan A.P."/>
            <person name="Thibaud-Nissen F."/>
            <person name="Schobel S."/>
            <person name="Town C.D."/>
        </authorList>
    </citation>
    <scope>GENOME REANNOTATION</scope>
    <source>
        <strain>cv. Columbia</strain>
    </source>
</reference>
<evidence type="ECO:0000250" key="1"/>
<evidence type="ECO:0000250" key="2">
    <source>
        <dbReference type="UniProtKB" id="Q9LPZ9"/>
    </source>
</evidence>
<evidence type="ECO:0000255" key="3"/>
<evidence type="ECO:0000255" key="4">
    <source>
        <dbReference type="PROSITE-ProRule" id="PRU00038"/>
    </source>
</evidence>
<evidence type="ECO:0000255" key="5">
    <source>
        <dbReference type="PROSITE-ProRule" id="PRU00159"/>
    </source>
</evidence>
<evidence type="ECO:0000255" key="6">
    <source>
        <dbReference type="PROSITE-ProRule" id="PRU00315"/>
    </source>
</evidence>
<evidence type="ECO:0000255" key="7">
    <source>
        <dbReference type="PROSITE-ProRule" id="PRU10027"/>
    </source>
</evidence>
<comment type="catalytic activity">
    <reaction>
        <text>L-seryl-[protein] + ATP = O-phospho-L-seryl-[protein] + ADP + H(+)</text>
        <dbReference type="Rhea" id="RHEA:17989"/>
        <dbReference type="Rhea" id="RHEA-COMP:9863"/>
        <dbReference type="Rhea" id="RHEA-COMP:11604"/>
        <dbReference type="ChEBI" id="CHEBI:15378"/>
        <dbReference type="ChEBI" id="CHEBI:29999"/>
        <dbReference type="ChEBI" id="CHEBI:30616"/>
        <dbReference type="ChEBI" id="CHEBI:83421"/>
        <dbReference type="ChEBI" id="CHEBI:456216"/>
        <dbReference type="EC" id="2.7.11.1"/>
    </reaction>
</comment>
<comment type="catalytic activity">
    <reaction>
        <text>L-threonyl-[protein] + ATP = O-phospho-L-threonyl-[protein] + ADP + H(+)</text>
        <dbReference type="Rhea" id="RHEA:46608"/>
        <dbReference type="Rhea" id="RHEA-COMP:11060"/>
        <dbReference type="Rhea" id="RHEA-COMP:11605"/>
        <dbReference type="ChEBI" id="CHEBI:15378"/>
        <dbReference type="ChEBI" id="CHEBI:30013"/>
        <dbReference type="ChEBI" id="CHEBI:30616"/>
        <dbReference type="ChEBI" id="CHEBI:61977"/>
        <dbReference type="ChEBI" id="CHEBI:456216"/>
        <dbReference type="EC" id="2.7.11.1"/>
    </reaction>
</comment>
<comment type="subcellular location">
    <subcellularLocation>
        <location evidence="1">Cell membrane</location>
        <topology evidence="1">Single-pass type I membrane protein</topology>
    </subcellularLocation>
</comment>
<comment type="similarity">
    <text evidence="5">Belongs to the protein kinase superfamily. Ser/Thr protein kinase family.</text>
</comment>
<sequence>MMTRFACLHLFTMFLFTLLSGSSSAVITTESPLSMGQTLSSANEVYELGFFSPNNTQDQYVGIWFKDTIPRVVVWVANREKPVTDSTAYLAISSSGSLLLLNGKHGTVWSSGVTFSSSGCRAELSDSGNLKVIDNVSERALWQSFDHLGDTLLHTSSLTYNLATAEKRVLTSWKSYTDPSPGDFLGQITPQVPSQGFVMRGSTPYWRSGPWAKTRFTGIPFMDESYTGPFTLHQDVNGSGYLTYFQRDYKLSRITLTSEGSIKMFRDNGMGWELYYEAPKKLCDFYGACGPFGLCVMSPSPMCKCFRGFVPKSVEEWKRGNWTGGCVRHTELDCLGNSTGEDADDFHQIANIKPPDFYEFASSVNAEECHQRCVHNCSCLAFAYIKGIGCLVWNQDLMDAVQFSATGELLSIRLARSELDGNKRKKTIVASIVSLTLFMILGFTAFGVWRCRVEHIAHISKDAWKNDLKPQDVPGLDFFDMHTIQNATNNFSLSNKLGQGGFGSVYKGKLQDGKEIAVKRLSSSSGQGKEEFMNEIVLISKLQHRNLVRVLGCCIEEEEKLLIYEFMVNKSLDTFLFDSRKRLEIDWPKRFDIIQGIARGLLYLHHDSRLRVIHRDLKVSNILLDEKMNPKISDFGLARMYQGTEYQDNTRRVVGTLGYMSPEYAWTGMFSEKSDIYSFGVLMLEIISGEKISRFSYGVEGKTLIAYAWESWSEYRGIDLLDQDLADSCHPLEVGRCIQIGLLCVQHQPADRPNTLELLAMLTTTSDLPSPKQPTFAFHTRDDESLSNDLITVNGMTQSVILGR</sequence>
<keyword id="KW-0067">ATP-binding</keyword>
<keyword id="KW-1003">Cell membrane</keyword>
<keyword id="KW-1015">Disulfide bond</keyword>
<keyword id="KW-0245">EGF-like domain</keyword>
<keyword id="KW-0325">Glycoprotein</keyword>
<keyword id="KW-0418">Kinase</keyword>
<keyword id="KW-0430">Lectin</keyword>
<keyword id="KW-0472">Membrane</keyword>
<keyword id="KW-0547">Nucleotide-binding</keyword>
<keyword id="KW-0597">Phosphoprotein</keyword>
<keyword id="KW-0675">Receptor</keyword>
<keyword id="KW-1185">Reference proteome</keyword>
<keyword id="KW-0723">Serine/threonine-protein kinase</keyword>
<keyword id="KW-0732">Signal</keyword>
<keyword id="KW-0808">Transferase</keyword>
<keyword id="KW-0812">Transmembrane</keyword>
<keyword id="KW-1133">Transmembrane helix</keyword>
<name>Y1150_ARATH</name>
<dbReference type="EC" id="2.7.11.1"/>
<dbReference type="EMBL" id="AC005850">
    <property type="protein sequence ID" value="AAD25558.1"/>
    <property type="molecule type" value="Genomic_DNA"/>
</dbReference>
<dbReference type="EMBL" id="CP002684">
    <property type="protein sequence ID" value="AEE33845.1"/>
    <property type="molecule type" value="Genomic_DNA"/>
</dbReference>
<dbReference type="PIR" id="B96640">
    <property type="entry name" value="B96640"/>
</dbReference>
<dbReference type="RefSeq" id="NP_564777.1">
    <property type="nucleotide sequence ID" value="NM_104831.3"/>
</dbReference>
<dbReference type="SMR" id="Q9SYA0"/>
<dbReference type="FunCoup" id="Q9SYA0">
    <property type="interactions" value="37"/>
</dbReference>
<dbReference type="STRING" id="3702.Q9SYA0"/>
<dbReference type="GlyGen" id="Q9SYA0">
    <property type="glycosylation" value="6 sites"/>
</dbReference>
<dbReference type="iPTMnet" id="Q9SYA0"/>
<dbReference type="PaxDb" id="3702-AT1G61500.1"/>
<dbReference type="EnsemblPlants" id="AT1G61500.1">
    <property type="protein sequence ID" value="AT1G61500.1"/>
    <property type="gene ID" value="AT1G61500"/>
</dbReference>
<dbReference type="GeneID" id="842444"/>
<dbReference type="Gramene" id="AT1G61500.1">
    <property type="protein sequence ID" value="AT1G61500.1"/>
    <property type="gene ID" value="AT1G61500"/>
</dbReference>
<dbReference type="KEGG" id="ath:AT1G61500"/>
<dbReference type="Araport" id="AT1G61500"/>
<dbReference type="TAIR" id="AT1G61500"/>
<dbReference type="eggNOG" id="ENOG502QT06">
    <property type="taxonomic scope" value="Eukaryota"/>
</dbReference>
<dbReference type="HOGENOM" id="CLU_000288_116_7_1"/>
<dbReference type="InParanoid" id="Q9SYA0"/>
<dbReference type="PhylomeDB" id="Q9SYA0"/>
<dbReference type="PRO" id="PR:Q9SYA0"/>
<dbReference type="Proteomes" id="UP000006548">
    <property type="component" value="Chromosome 1"/>
</dbReference>
<dbReference type="ExpressionAtlas" id="Q9SYA0">
    <property type="expression patterns" value="baseline and differential"/>
</dbReference>
<dbReference type="GO" id="GO:0005886">
    <property type="term" value="C:plasma membrane"/>
    <property type="evidence" value="ECO:0007669"/>
    <property type="project" value="UniProtKB-SubCell"/>
</dbReference>
<dbReference type="GO" id="GO:0005524">
    <property type="term" value="F:ATP binding"/>
    <property type="evidence" value="ECO:0007669"/>
    <property type="project" value="UniProtKB-KW"/>
</dbReference>
<dbReference type="GO" id="GO:0005516">
    <property type="term" value="F:calmodulin binding"/>
    <property type="evidence" value="ECO:0000250"/>
    <property type="project" value="UniProtKB"/>
</dbReference>
<dbReference type="GO" id="GO:0030246">
    <property type="term" value="F:carbohydrate binding"/>
    <property type="evidence" value="ECO:0007669"/>
    <property type="project" value="UniProtKB-KW"/>
</dbReference>
<dbReference type="GO" id="GO:0106310">
    <property type="term" value="F:protein serine kinase activity"/>
    <property type="evidence" value="ECO:0007669"/>
    <property type="project" value="RHEA"/>
</dbReference>
<dbReference type="GO" id="GO:0004674">
    <property type="term" value="F:protein serine/threonine kinase activity"/>
    <property type="evidence" value="ECO:0000250"/>
    <property type="project" value="UniProtKB"/>
</dbReference>
<dbReference type="GO" id="GO:0031625">
    <property type="term" value="F:ubiquitin protein ligase binding"/>
    <property type="evidence" value="ECO:0007669"/>
    <property type="project" value="UniProtKB-ARBA"/>
</dbReference>
<dbReference type="GO" id="GO:0048544">
    <property type="term" value="P:recognition of pollen"/>
    <property type="evidence" value="ECO:0007669"/>
    <property type="project" value="InterPro"/>
</dbReference>
<dbReference type="CDD" id="cd00028">
    <property type="entry name" value="B_lectin"/>
    <property type="match status" value="1"/>
</dbReference>
<dbReference type="CDD" id="cd01098">
    <property type="entry name" value="PAN_AP_plant"/>
    <property type="match status" value="1"/>
</dbReference>
<dbReference type="CDD" id="cd14066">
    <property type="entry name" value="STKc_IRAK"/>
    <property type="match status" value="1"/>
</dbReference>
<dbReference type="FunFam" id="1.10.510.10:FF:000345">
    <property type="entry name" value="G-type lectin S-receptor-like serine/threonine-protein kinase"/>
    <property type="match status" value="1"/>
</dbReference>
<dbReference type="FunFam" id="2.90.10.10:FF:000003">
    <property type="entry name" value="G-type lectin S-receptor-like serine/threonine-protein kinase"/>
    <property type="match status" value="1"/>
</dbReference>
<dbReference type="FunFam" id="3.30.200.20:FF:000401">
    <property type="entry name" value="G-type lectin S-receptor-like serine/threonine-protein kinase SD1-29"/>
    <property type="match status" value="1"/>
</dbReference>
<dbReference type="Gene3D" id="2.90.10.10">
    <property type="entry name" value="Bulb-type lectin domain"/>
    <property type="match status" value="1"/>
</dbReference>
<dbReference type="Gene3D" id="3.30.200.20">
    <property type="entry name" value="Phosphorylase Kinase, domain 1"/>
    <property type="match status" value="1"/>
</dbReference>
<dbReference type="Gene3D" id="1.10.510.10">
    <property type="entry name" value="Transferase(Phosphotransferase) domain 1"/>
    <property type="match status" value="1"/>
</dbReference>
<dbReference type="InterPro" id="IPR001480">
    <property type="entry name" value="Bulb-type_lectin_dom"/>
</dbReference>
<dbReference type="InterPro" id="IPR036426">
    <property type="entry name" value="Bulb-type_lectin_dom_sf"/>
</dbReference>
<dbReference type="InterPro" id="IPR011009">
    <property type="entry name" value="Kinase-like_dom_sf"/>
</dbReference>
<dbReference type="InterPro" id="IPR003609">
    <property type="entry name" value="Pan_app"/>
</dbReference>
<dbReference type="InterPro" id="IPR000719">
    <property type="entry name" value="Prot_kinase_dom"/>
</dbReference>
<dbReference type="InterPro" id="IPR017441">
    <property type="entry name" value="Protein_kinase_ATP_BS"/>
</dbReference>
<dbReference type="InterPro" id="IPR021820">
    <property type="entry name" value="S-locus_recpt_kinase_C"/>
</dbReference>
<dbReference type="InterPro" id="IPR000858">
    <property type="entry name" value="S_locus_glycoprot_dom"/>
</dbReference>
<dbReference type="InterPro" id="IPR001245">
    <property type="entry name" value="Ser-Thr/Tyr_kinase_cat_dom"/>
</dbReference>
<dbReference type="InterPro" id="IPR008271">
    <property type="entry name" value="Ser/Thr_kinase_AS"/>
</dbReference>
<dbReference type="InterPro" id="IPR024171">
    <property type="entry name" value="SRK-like_kinase"/>
</dbReference>
<dbReference type="PANTHER" id="PTHR27002:SF542">
    <property type="entry name" value="BNACNNG56910D PROTEIN"/>
    <property type="match status" value="1"/>
</dbReference>
<dbReference type="PANTHER" id="PTHR27002">
    <property type="entry name" value="RECEPTOR-LIKE SERINE/THREONINE-PROTEIN KINASE SD1-8"/>
    <property type="match status" value="1"/>
</dbReference>
<dbReference type="Pfam" id="PF01453">
    <property type="entry name" value="B_lectin"/>
    <property type="match status" value="1"/>
</dbReference>
<dbReference type="Pfam" id="PF11883">
    <property type="entry name" value="DUF3403"/>
    <property type="match status" value="1"/>
</dbReference>
<dbReference type="Pfam" id="PF08276">
    <property type="entry name" value="PAN_2"/>
    <property type="match status" value="1"/>
</dbReference>
<dbReference type="Pfam" id="PF07714">
    <property type="entry name" value="PK_Tyr_Ser-Thr"/>
    <property type="match status" value="1"/>
</dbReference>
<dbReference type="Pfam" id="PF00954">
    <property type="entry name" value="S_locus_glycop"/>
    <property type="match status" value="1"/>
</dbReference>
<dbReference type="PIRSF" id="PIRSF000641">
    <property type="entry name" value="SRK"/>
    <property type="match status" value="1"/>
</dbReference>
<dbReference type="SMART" id="SM00108">
    <property type="entry name" value="B_lectin"/>
    <property type="match status" value="1"/>
</dbReference>
<dbReference type="SMART" id="SM00473">
    <property type="entry name" value="PAN_AP"/>
    <property type="match status" value="1"/>
</dbReference>
<dbReference type="SMART" id="SM00220">
    <property type="entry name" value="S_TKc"/>
    <property type="match status" value="1"/>
</dbReference>
<dbReference type="SUPFAM" id="SSF51110">
    <property type="entry name" value="alpha-D-mannose-specific plant lectins"/>
    <property type="match status" value="1"/>
</dbReference>
<dbReference type="SUPFAM" id="SSF56112">
    <property type="entry name" value="Protein kinase-like (PK-like)"/>
    <property type="match status" value="1"/>
</dbReference>
<dbReference type="PROSITE" id="PS50927">
    <property type="entry name" value="BULB_LECTIN"/>
    <property type="match status" value="1"/>
</dbReference>
<dbReference type="PROSITE" id="PS50948">
    <property type="entry name" value="PAN"/>
    <property type="match status" value="1"/>
</dbReference>
<dbReference type="PROSITE" id="PS00107">
    <property type="entry name" value="PROTEIN_KINASE_ATP"/>
    <property type="match status" value="1"/>
</dbReference>
<dbReference type="PROSITE" id="PS50011">
    <property type="entry name" value="PROTEIN_KINASE_DOM"/>
    <property type="match status" value="1"/>
</dbReference>
<dbReference type="PROSITE" id="PS00108">
    <property type="entry name" value="PROTEIN_KINASE_ST"/>
    <property type="match status" value="1"/>
</dbReference>
<organism>
    <name type="scientific">Arabidopsis thaliana</name>
    <name type="common">Mouse-ear cress</name>
    <dbReference type="NCBI Taxonomy" id="3702"/>
    <lineage>
        <taxon>Eukaryota</taxon>
        <taxon>Viridiplantae</taxon>
        <taxon>Streptophyta</taxon>
        <taxon>Embryophyta</taxon>
        <taxon>Tracheophyta</taxon>
        <taxon>Spermatophyta</taxon>
        <taxon>Magnoliopsida</taxon>
        <taxon>eudicotyledons</taxon>
        <taxon>Gunneridae</taxon>
        <taxon>Pentapetalae</taxon>
        <taxon>rosids</taxon>
        <taxon>malvids</taxon>
        <taxon>Brassicales</taxon>
        <taxon>Brassicaceae</taxon>
        <taxon>Camelineae</taxon>
        <taxon>Arabidopsis</taxon>
    </lineage>
</organism>